<evidence type="ECO:0000255" key="1">
    <source>
        <dbReference type="HAMAP-Rule" id="MF_00693"/>
    </source>
</evidence>
<evidence type="ECO:0000305" key="2"/>
<organism>
    <name type="scientific">Geobacillus kaustophilus (strain HTA426)</name>
    <dbReference type="NCBI Taxonomy" id="235909"/>
    <lineage>
        <taxon>Bacteria</taxon>
        <taxon>Bacillati</taxon>
        <taxon>Bacillota</taxon>
        <taxon>Bacilli</taxon>
        <taxon>Bacillales</taxon>
        <taxon>Anoxybacillaceae</taxon>
        <taxon>Geobacillus</taxon>
        <taxon>Geobacillus thermoleovorans group</taxon>
    </lineage>
</organism>
<gene>
    <name type="ordered locus">GK2594</name>
</gene>
<name>Y2594_GEOKA</name>
<protein>
    <recommendedName>
        <fullName evidence="1">Probable transcriptional regulatory protein GK2594</fullName>
    </recommendedName>
</protein>
<reference key="1">
    <citation type="journal article" date="2004" name="Nucleic Acids Res.">
        <title>Thermoadaptation trait revealed by the genome sequence of thermophilic Geobacillus kaustophilus.</title>
        <authorList>
            <person name="Takami H."/>
            <person name="Takaki Y."/>
            <person name="Chee G.-J."/>
            <person name="Nishi S."/>
            <person name="Shimamura S."/>
            <person name="Suzuki H."/>
            <person name="Matsui S."/>
            <person name="Uchiyama I."/>
        </authorList>
    </citation>
    <scope>NUCLEOTIDE SEQUENCE [LARGE SCALE GENOMIC DNA]</scope>
    <source>
        <strain>HTA426</strain>
    </source>
</reference>
<accession>Q5KWQ7</accession>
<keyword id="KW-0963">Cytoplasm</keyword>
<keyword id="KW-0238">DNA-binding</keyword>
<keyword id="KW-1185">Reference proteome</keyword>
<keyword id="KW-0804">Transcription</keyword>
<keyword id="KW-0805">Transcription regulation</keyword>
<proteinExistence type="inferred from homology"/>
<comment type="subcellular location">
    <subcellularLocation>
        <location evidence="1">Cytoplasm</location>
    </subcellularLocation>
</comment>
<comment type="similarity">
    <text evidence="1">Belongs to the TACO1 family.</text>
</comment>
<comment type="sequence caution" evidence="2">
    <conflict type="erroneous initiation">
        <sequence resource="EMBL-CDS" id="BAD76879"/>
    </conflict>
</comment>
<sequence length="246" mass="27360">MAGHSKWKNIQRRKNAQDAKRGKLFMKLAKEIYVAAKSGGGDPASNPSLRLVIEKAKAANMPSENIERAIKKATGTQEHTNYEEIRYEGYGPGGVAVMVVCLTDNKNRTAANVRAAFAKNGGNLGETGCVSYLFERKGLLVIDREQHNVDEDELLLLAIEAGAEEMETTDESFEIYTAPESFETVKDELEQQGFTFASAEITMIPQTYTTLEGDDLKKMLKLIDTLEDDDDVQEVYHNLDESVLEE</sequence>
<dbReference type="EMBL" id="BA000043">
    <property type="protein sequence ID" value="BAD76879.1"/>
    <property type="status" value="ALT_INIT"/>
    <property type="molecule type" value="Genomic_DNA"/>
</dbReference>
<dbReference type="RefSeq" id="WP_011232070.1">
    <property type="nucleotide sequence ID" value="NC_006510.1"/>
</dbReference>
<dbReference type="SMR" id="Q5KWQ7"/>
<dbReference type="STRING" id="235909.GK2594"/>
<dbReference type="KEGG" id="gka:GK2594"/>
<dbReference type="PATRIC" id="fig|235909.7.peg.2773"/>
<dbReference type="eggNOG" id="COG0217">
    <property type="taxonomic scope" value="Bacteria"/>
</dbReference>
<dbReference type="HOGENOM" id="CLU_062974_2_2_9"/>
<dbReference type="Proteomes" id="UP000001172">
    <property type="component" value="Chromosome"/>
</dbReference>
<dbReference type="GO" id="GO:0005829">
    <property type="term" value="C:cytosol"/>
    <property type="evidence" value="ECO:0007669"/>
    <property type="project" value="TreeGrafter"/>
</dbReference>
<dbReference type="GO" id="GO:0003677">
    <property type="term" value="F:DNA binding"/>
    <property type="evidence" value="ECO:0007669"/>
    <property type="project" value="UniProtKB-UniRule"/>
</dbReference>
<dbReference type="GO" id="GO:0006355">
    <property type="term" value="P:regulation of DNA-templated transcription"/>
    <property type="evidence" value="ECO:0007669"/>
    <property type="project" value="UniProtKB-UniRule"/>
</dbReference>
<dbReference type="FunFam" id="1.10.10.200:FF:000002">
    <property type="entry name" value="Probable transcriptional regulatory protein CLM62_37755"/>
    <property type="match status" value="1"/>
</dbReference>
<dbReference type="FunFam" id="3.30.70.980:FF:000002">
    <property type="entry name" value="Probable transcriptional regulatory protein YebC"/>
    <property type="match status" value="1"/>
</dbReference>
<dbReference type="Gene3D" id="1.10.10.200">
    <property type="match status" value="1"/>
</dbReference>
<dbReference type="Gene3D" id="3.30.70.980">
    <property type="match status" value="2"/>
</dbReference>
<dbReference type="HAMAP" id="MF_00693">
    <property type="entry name" value="Transcrip_reg_TACO1"/>
    <property type="match status" value="1"/>
</dbReference>
<dbReference type="InterPro" id="IPR017856">
    <property type="entry name" value="Integrase-like_N"/>
</dbReference>
<dbReference type="InterPro" id="IPR048300">
    <property type="entry name" value="TACO1_YebC-like_2nd/3rd_dom"/>
</dbReference>
<dbReference type="InterPro" id="IPR049083">
    <property type="entry name" value="TACO1_YebC_N"/>
</dbReference>
<dbReference type="InterPro" id="IPR002876">
    <property type="entry name" value="Transcrip_reg_TACO1-like"/>
</dbReference>
<dbReference type="InterPro" id="IPR026564">
    <property type="entry name" value="Transcrip_reg_TACO1-like_dom3"/>
</dbReference>
<dbReference type="InterPro" id="IPR029072">
    <property type="entry name" value="YebC-like"/>
</dbReference>
<dbReference type="NCBIfam" id="NF001030">
    <property type="entry name" value="PRK00110.1"/>
    <property type="match status" value="1"/>
</dbReference>
<dbReference type="NCBIfam" id="NF009044">
    <property type="entry name" value="PRK12378.1"/>
    <property type="match status" value="1"/>
</dbReference>
<dbReference type="NCBIfam" id="TIGR01033">
    <property type="entry name" value="YebC/PmpR family DNA-binding transcriptional regulator"/>
    <property type="match status" value="1"/>
</dbReference>
<dbReference type="PANTHER" id="PTHR12532:SF6">
    <property type="entry name" value="TRANSCRIPTIONAL REGULATORY PROTEIN YEBC-RELATED"/>
    <property type="match status" value="1"/>
</dbReference>
<dbReference type="PANTHER" id="PTHR12532">
    <property type="entry name" value="TRANSLATIONAL ACTIVATOR OF CYTOCHROME C OXIDASE 1"/>
    <property type="match status" value="1"/>
</dbReference>
<dbReference type="Pfam" id="PF20772">
    <property type="entry name" value="TACO1_YebC_N"/>
    <property type="match status" value="1"/>
</dbReference>
<dbReference type="Pfam" id="PF01709">
    <property type="entry name" value="Transcrip_reg"/>
    <property type="match status" value="1"/>
</dbReference>
<dbReference type="SUPFAM" id="SSF75625">
    <property type="entry name" value="YebC-like"/>
    <property type="match status" value="1"/>
</dbReference>
<feature type="chain" id="PRO_0000175813" description="Probable transcriptional regulatory protein GK2594">
    <location>
        <begin position="1"/>
        <end position="246"/>
    </location>
</feature>